<gene>
    <name type="primary">COX2</name>
    <name type="synonym">COXII</name>
    <name type="ordered locus">AtMg00160</name>
</gene>
<name>COX2_ARATH</name>
<accession>P93285</accession>
<accession>A0A2P2CLF0</accession>
<sequence length="260" mass="29685">MIVLKWLFFTISPCDAAEPWQLGFQDAATPIMQGIIDLHHDIFFFLILILVFVLWILVRALWHFHYKKNAIPQRIVHGTTIEILWTIFPSIILMFIAIPSFALLYSMDEVVVDPAITIKAIGHQWYWTYEYSDYNSSDEQSLTFDSYMIPEEDLELGQLRLLEVDNRVVVPAKTHLRIIVTSADVLHSWAVPSLGVKCDAVPGRLNQISILVQREGVYYGQCSEICGTNHAFMPIVVEAVSRKDYGSWVSNQLIPQTGEA</sequence>
<protein>
    <recommendedName>
        <fullName>Cytochrome c oxidase subunit 2</fullName>
        <ecNumber>7.1.1.9</ecNumber>
    </recommendedName>
    <alternativeName>
        <fullName>Cytochrome c oxidase polypeptide II</fullName>
    </alternativeName>
</protein>
<proteinExistence type="evidence at protein level"/>
<organism>
    <name type="scientific">Arabidopsis thaliana</name>
    <name type="common">Mouse-ear cress</name>
    <dbReference type="NCBI Taxonomy" id="3702"/>
    <lineage>
        <taxon>Eukaryota</taxon>
        <taxon>Viridiplantae</taxon>
        <taxon>Streptophyta</taxon>
        <taxon>Embryophyta</taxon>
        <taxon>Tracheophyta</taxon>
        <taxon>Spermatophyta</taxon>
        <taxon>Magnoliopsida</taxon>
        <taxon>eudicotyledons</taxon>
        <taxon>Gunneridae</taxon>
        <taxon>Pentapetalae</taxon>
        <taxon>rosids</taxon>
        <taxon>malvids</taxon>
        <taxon>Brassicales</taxon>
        <taxon>Brassicaceae</taxon>
        <taxon>Camelineae</taxon>
        <taxon>Arabidopsis</taxon>
    </lineage>
</organism>
<dbReference type="EC" id="7.1.1.9"/>
<dbReference type="EMBL" id="Y08501">
    <property type="protein sequence ID" value="CAA69761.3"/>
    <property type="status" value="ALT_SEQ"/>
    <property type="molecule type" value="Genomic_DNA"/>
</dbReference>
<dbReference type="EMBL" id="BK010421">
    <property type="protein sequence ID" value="DAB41495.2"/>
    <property type="molecule type" value="Genomic_DNA"/>
</dbReference>
<dbReference type="RefSeq" id="NP_085487.1">
    <property type="nucleotide sequence ID" value="NC_001284.2"/>
</dbReference>
<dbReference type="SMR" id="P93285"/>
<dbReference type="BioGRID" id="7">
    <property type="interactions" value="1"/>
</dbReference>
<dbReference type="FunCoup" id="P93285">
    <property type="interactions" value="156"/>
</dbReference>
<dbReference type="STRING" id="3702.A0A2P2CLF0"/>
<dbReference type="PaxDb" id="3702-ATMG00160.1"/>
<dbReference type="Araport" id="ATMG00160"/>
<dbReference type="TAIR" id="ATMG00160">
    <property type="gene designation" value="COX2"/>
</dbReference>
<dbReference type="eggNOG" id="KOG4767">
    <property type="taxonomic scope" value="Eukaryota"/>
</dbReference>
<dbReference type="InParanoid" id="P93285"/>
<dbReference type="BioCyc" id="ARA:ATMG00160-MONOMER"/>
<dbReference type="BioCyc" id="MetaCyc:ATMG00160-MONOMER"/>
<dbReference type="CD-CODE" id="4299E36E">
    <property type="entry name" value="Nucleolus"/>
</dbReference>
<dbReference type="PRO" id="PR:P93285"/>
<dbReference type="Proteomes" id="UP000006548">
    <property type="component" value="Mitochondrion MT"/>
</dbReference>
<dbReference type="ExpressionAtlas" id="P93285">
    <property type="expression patterns" value="baseline and differential"/>
</dbReference>
<dbReference type="GO" id="GO:0005743">
    <property type="term" value="C:mitochondrial inner membrane"/>
    <property type="evidence" value="ECO:0007669"/>
    <property type="project" value="UniProtKB-SubCell"/>
</dbReference>
<dbReference type="GO" id="GO:0005507">
    <property type="term" value="F:copper ion binding"/>
    <property type="evidence" value="ECO:0007669"/>
    <property type="project" value="InterPro"/>
</dbReference>
<dbReference type="GO" id="GO:0004129">
    <property type="term" value="F:cytochrome-c oxidase activity"/>
    <property type="evidence" value="ECO:0007669"/>
    <property type="project" value="UniProtKB-EC"/>
</dbReference>
<dbReference type="GO" id="GO:0042773">
    <property type="term" value="P:ATP synthesis coupled electron transport"/>
    <property type="evidence" value="ECO:0000318"/>
    <property type="project" value="GO_Central"/>
</dbReference>
<dbReference type="CDD" id="cd13912">
    <property type="entry name" value="CcO_II_C"/>
    <property type="match status" value="1"/>
</dbReference>
<dbReference type="FunFam" id="1.10.287.90:FF:000004">
    <property type="entry name" value="Cytochrome c oxidase subunit 2"/>
    <property type="match status" value="1"/>
</dbReference>
<dbReference type="FunFam" id="2.60.40.420:FF:000001">
    <property type="entry name" value="Cytochrome c oxidase subunit 2"/>
    <property type="match status" value="1"/>
</dbReference>
<dbReference type="Gene3D" id="1.10.287.90">
    <property type="match status" value="1"/>
</dbReference>
<dbReference type="Gene3D" id="2.60.40.420">
    <property type="entry name" value="Cupredoxins - blue copper proteins"/>
    <property type="match status" value="1"/>
</dbReference>
<dbReference type="InterPro" id="IPR045187">
    <property type="entry name" value="CcO_II"/>
</dbReference>
<dbReference type="InterPro" id="IPR002429">
    <property type="entry name" value="CcO_II-like_C"/>
</dbReference>
<dbReference type="InterPro" id="IPR034210">
    <property type="entry name" value="CcO_II_C"/>
</dbReference>
<dbReference type="InterPro" id="IPR001505">
    <property type="entry name" value="Copper_CuA"/>
</dbReference>
<dbReference type="InterPro" id="IPR008972">
    <property type="entry name" value="Cupredoxin"/>
</dbReference>
<dbReference type="InterPro" id="IPR014222">
    <property type="entry name" value="Cyt_c_oxidase_su2"/>
</dbReference>
<dbReference type="InterPro" id="IPR011759">
    <property type="entry name" value="Cyt_c_oxidase_su2_TM_dom"/>
</dbReference>
<dbReference type="InterPro" id="IPR036257">
    <property type="entry name" value="Cyt_c_oxidase_su2_TM_sf"/>
</dbReference>
<dbReference type="NCBIfam" id="TIGR02866">
    <property type="entry name" value="CoxB"/>
    <property type="match status" value="1"/>
</dbReference>
<dbReference type="PANTHER" id="PTHR22888:SF9">
    <property type="entry name" value="CYTOCHROME C OXIDASE SUBUNIT 2"/>
    <property type="match status" value="1"/>
</dbReference>
<dbReference type="PANTHER" id="PTHR22888">
    <property type="entry name" value="CYTOCHROME C OXIDASE, SUBUNIT II"/>
    <property type="match status" value="1"/>
</dbReference>
<dbReference type="Pfam" id="PF00116">
    <property type="entry name" value="COX2"/>
    <property type="match status" value="1"/>
</dbReference>
<dbReference type="Pfam" id="PF02790">
    <property type="entry name" value="COX2_TM"/>
    <property type="match status" value="1"/>
</dbReference>
<dbReference type="PRINTS" id="PR01166">
    <property type="entry name" value="CYCOXIDASEII"/>
</dbReference>
<dbReference type="SUPFAM" id="SSF49503">
    <property type="entry name" value="Cupredoxins"/>
    <property type="match status" value="1"/>
</dbReference>
<dbReference type="SUPFAM" id="SSF81464">
    <property type="entry name" value="Cytochrome c oxidase subunit II-like, transmembrane region"/>
    <property type="match status" value="1"/>
</dbReference>
<dbReference type="PROSITE" id="PS00078">
    <property type="entry name" value="COX2"/>
    <property type="match status" value="1"/>
</dbReference>
<dbReference type="PROSITE" id="PS50857">
    <property type="entry name" value="COX2_CUA"/>
    <property type="match status" value="1"/>
</dbReference>
<dbReference type="PROSITE" id="PS50999">
    <property type="entry name" value="COX2_TM"/>
    <property type="match status" value="1"/>
</dbReference>
<geneLocation type="mitochondrion"/>
<feature type="chain" id="PRO_0000183502" description="Cytochrome c oxidase subunit 2">
    <location>
        <begin position="1"/>
        <end position="260"/>
    </location>
</feature>
<feature type="topological domain" description="Mitochondrial intermembrane" evidence="2">
    <location>
        <begin position="1"/>
        <end position="41"/>
    </location>
</feature>
<feature type="transmembrane region" description="Helical" evidence="2">
    <location>
        <begin position="42"/>
        <end position="62"/>
    </location>
</feature>
<feature type="topological domain" description="Mitochondrial matrix" evidence="2">
    <location>
        <begin position="63"/>
        <end position="86"/>
    </location>
</feature>
<feature type="transmembrane region" description="Helical" evidence="2">
    <location>
        <begin position="87"/>
        <end position="107"/>
    </location>
</feature>
<feature type="topological domain" description="Mitochondrial intermembrane" evidence="2">
    <location>
        <begin position="108"/>
        <end position="260"/>
    </location>
</feature>
<feature type="binding site" evidence="1">
    <location>
        <position position="187"/>
    </location>
    <ligand>
        <name>Cu cation</name>
        <dbReference type="ChEBI" id="CHEBI:23378"/>
        <label>A1</label>
    </ligand>
</feature>
<feature type="binding site" evidence="1">
    <location>
        <position position="222"/>
    </location>
    <ligand>
        <name>Cu cation</name>
        <dbReference type="ChEBI" id="CHEBI:23378"/>
        <label>A1</label>
    </ligand>
</feature>
<feature type="binding site" evidence="1">
    <location>
        <position position="222"/>
    </location>
    <ligand>
        <name>Cu cation</name>
        <dbReference type="ChEBI" id="CHEBI:23378"/>
        <label>A2</label>
    </ligand>
</feature>
<feature type="binding site" evidence="1">
    <location>
        <position position="224"/>
    </location>
    <ligand>
        <name>Cu cation</name>
        <dbReference type="ChEBI" id="CHEBI:23378"/>
        <label>A2</label>
    </ligand>
</feature>
<feature type="binding site" evidence="1">
    <location>
        <position position="224"/>
    </location>
    <ligand>
        <name>Mg(2+)</name>
        <dbReference type="ChEBI" id="CHEBI:18420"/>
        <note>ligand shared with subunit 1</note>
    </ligand>
</feature>
<feature type="binding site" evidence="1">
    <location>
        <position position="226"/>
    </location>
    <ligand>
        <name>Cu cation</name>
        <dbReference type="ChEBI" id="CHEBI:23378"/>
        <label>A1</label>
    </ligand>
</feature>
<feature type="binding site" evidence="1">
    <location>
        <position position="226"/>
    </location>
    <ligand>
        <name>Cu cation</name>
        <dbReference type="ChEBI" id="CHEBI:23378"/>
        <label>A2</label>
    </ligand>
</feature>
<feature type="binding site" evidence="1">
    <location>
        <position position="230"/>
    </location>
    <ligand>
        <name>Cu cation</name>
        <dbReference type="ChEBI" id="CHEBI:23378"/>
        <label>A2</label>
    </ligand>
</feature>
<feature type="binding site" evidence="1">
    <location>
        <position position="233"/>
    </location>
    <ligand>
        <name>Cu cation</name>
        <dbReference type="ChEBI" id="CHEBI:23378"/>
        <label>A1</label>
    </ligand>
</feature>
<feature type="sequence conflict" description="In Ref. 1; CAA69761." evidence="5" ref="1">
    <original>P</original>
    <variation>S</variation>
    <location>
        <position position="234"/>
    </location>
</feature>
<comment type="function">
    <text evidence="1">Component of the cytochrome c oxidase, the last enzyme in the mitochondrial electron transport chain which drives oxidative phosphorylation. The respiratory chain contains 3 multisubunit complexes succinate dehydrogenase (complex II, CII), ubiquinol-cytochrome c oxidoreductase (cytochrome b-c1 complex, complex III, CIII) and cytochrome c oxidase (complex IV, CIV), that cooperate to transfer electrons derived from NADH and succinate to molecular oxygen, creating an electrochemical gradient over the inner membrane that drives transmembrane transport and the ATP synthase. Cytochrome c oxidase is the component of the respiratory chain that catalyzes the reduction of oxygen to water. Electrons originating from reduced cytochrome c in the intermembrane space (IMS) are transferred via the dinuclear copper A center (CU(A)) of subunit 2 and heme A of subunit 1 to the active site in subunit 1, a binuclear center (BNC) formed by heme A3 and copper B (CU(B)). The BNC reduces molecular oxygen to 2 water molecules using 4 electrons from cytochrome c in the IMS and 4 protons from the mitochondrial matrix.</text>
</comment>
<comment type="catalytic activity">
    <reaction evidence="1">
        <text>4 Fe(II)-[cytochrome c] + O2 + 8 H(+)(in) = 4 Fe(III)-[cytochrome c] + 2 H2O + 4 H(+)(out)</text>
        <dbReference type="Rhea" id="RHEA:11436"/>
        <dbReference type="Rhea" id="RHEA-COMP:10350"/>
        <dbReference type="Rhea" id="RHEA-COMP:14399"/>
        <dbReference type="ChEBI" id="CHEBI:15377"/>
        <dbReference type="ChEBI" id="CHEBI:15378"/>
        <dbReference type="ChEBI" id="CHEBI:15379"/>
        <dbReference type="ChEBI" id="CHEBI:29033"/>
        <dbReference type="ChEBI" id="CHEBI:29034"/>
        <dbReference type="EC" id="7.1.1.9"/>
    </reaction>
    <physiologicalReaction direction="left-to-right" evidence="1">
        <dbReference type="Rhea" id="RHEA:11437"/>
    </physiologicalReaction>
</comment>
<comment type="cofactor">
    <cofactor evidence="1">
        <name>Cu cation</name>
        <dbReference type="ChEBI" id="CHEBI:23378"/>
    </cofactor>
    <text evidence="1">Binds a dinuclear copper A center per subunit.</text>
</comment>
<comment type="subunit">
    <text evidence="1">Component of the cytochrome c oxidase (complex IV, CIV), a multisubunit enzyme composed of a catalytic core of 3 subunits and several supernumerary subunits. The complex exists as a monomer or a dimer and forms supercomplexes (SCs) in the inner mitochondrial membrane with ubiquinol-cytochrome c oxidoreductase (cytochrome b-c1 complex, complex III, CIII).</text>
</comment>
<comment type="subcellular location">
    <subcellularLocation>
        <location evidence="1">Mitochondrion inner membrane</location>
        <topology evidence="1">Multi-pass membrane protein</topology>
    </subcellularLocation>
</comment>
<comment type="RNA editing">
    <location>
        <position position="9" evidence="3 4"/>
    </location>
    <location>
        <position position="24" evidence="3 4"/>
    </location>
    <location>
        <position position="85" evidence="3 4"/>
    </location>
    <location>
        <position position="93" evidence="3 4"/>
    </location>
    <location>
        <position position="127" evidence="3 4"/>
    </location>
    <location>
        <position position="159" evidence="3 4"/>
    </location>
    <location>
        <position position="186" evidence="3 4"/>
    </location>
    <location>
        <position position="194" evidence="3 4"/>
    </location>
    <location>
        <position position="233" evidence="3 4"/>
    </location>
    <location>
        <position position="241" evidence="3 4"/>
    </location>
    <location>
        <position position="248" evidence="3 4"/>
    </location>
</comment>
<comment type="similarity">
    <text evidence="5">Belongs to the cytochrome c oxidase subunit 2 family.</text>
</comment>
<evidence type="ECO:0000250" key="1">
    <source>
        <dbReference type="UniProtKB" id="P00410"/>
    </source>
</evidence>
<evidence type="ECO:0000255" key="2"/>
<evidence type="ECO:0000269" key="3">
    <source>
    </source>
</evidence>
<evidence type="ECO:0000269" key="4">
    <source>
    </source>
</evidence>
<evidence type="ECO:0000305" key="5"/>
<reference key="1">
    <citation type="journal article" date="1997" name="Nat. Genet.">
        <title>The mitochondrial genome of Arabidopsis thaliana contains 57 genes in 366,924 nucleotides.</title>
        <authorList>
            <person name="Unseld M."/>
            <person name="Marienfeld J.R."/>
            <person name="Brandt P."/>
            <person name="Brennicke A."/>
        </authorList>
    </citation>
    <scope>NUCLEOTIDE SEQUENCE [LARGE SCALE GENOMIC DNA]</scope>
    <source>
        <strain>cv. C24</strain>
    </source>
</reference>
<reference key="2">
    <citation type="journal article" date="1999" name="Proc. Natl. Acad. Sci. U.S.A.">
        <title>RNA editing in Arabidopsis mitochondria effects 441 C to U changes in ORFs.</title>
        <authorList>
            <person name="Giege P."/>
            <person name="Brennicke A."/>
        </authorList>
    </citation>
    <scope>NUCLEOTIDE SEQUENCE [GENOMIC DNA]</scope>
    <scope>RNA EDITING</scope>
</reference>
<reference key="3">
    <citation type="journal article" date="2018" name="Plant Cell">
        <title>Correction of persistent errors in Arabidopsis reference mitochondrial genomes.</title>
        <authorList>
            <person name="Sloan D.B."/>
            <person name="Wu Z."/>
            <person name="Sharbrough J."/>
        </authorList>
    </citation>
    <scope>NUCLEOTIDE SEQUENCE [LARGE SCALE GENOMIC DNA]</scope>
    <scope>RNA EDITING</scope>
    <source>
        <strain>cv. Columbia</strain>
    </source>
</reference>
<reference key="4">
    <citation type="journal article" date="2004" name="Plant Cell">
        <title>Experimental analysis of the Arabidopsis mitochondrial proteome highlights signaling and regulatory components, provides assessment of targeting prediction programs, and indicates plant-specific mitochondrial proteins.</title>
        <authorList>
            <person name="Heazlewood J.L."/>
            <person name="Tonti-Filippini J.S."/>
            <person name="Gout A.M."/>
            <person name="Day D.A."/>
            <person name="Whelan J."/>
            <person name="Millar A.H."/>
        </authorList>
    </citation>
    <scope>IDENTIFICATION BY MASS SPECTROMETRY</scope>
    <scope>SUBCELLULAR LOCATION [LARGE SCALE ANALYSIS]</scope>
    <source>
        <strain>cv. Landsberg erecta</strain>
    </source>
</reference>
<keyword id="KW-0186">Copper</keyword>
<keyword id="KW-0249">Electron transport</keyword>
<keyword id="KW-0460">Magnesium</keyword>
<keyword id="KW-0472">Membrane</keyword>
<keyword id="KW-0479">Metal-binding</keyword>
<keyword id="KW-0496">Mitochondrion</keyword>
<keyword id="KW-0999">Mitochondrion inner membrane</keyword>
<keyword id="KW-1185">Reference proteome</keyword>
<keyword id="KW-0679">Respiratory chain</keyword>
<keyword id="KW-0691">RNA editing</keyword>
<keyword id="KW-1278">Translocase</keyword>
<keyword id="KW-0812">Transmembrane</keyword>
<keyword id="KW-1133">Transmembrane helix</keyword>
<keyword id="KW-0813">Transport</keyword>